<gene>
    <name evidence="1" type="primary">rplJ</name>
    <name type="ordered locus">Sbal195_0191</name>
</gene>
<proteinExistence type="inferred from homology"/>
<feature type="chain" id="PRO_1000079560" description="Large ribosomal subunit protein uL10">
    <location>
        <begin position="1"/>
        <end position="166"/>
    </location>
</feature>
<reference key="1">
    <citation type="submission" date="2007-11" db="EMBL/GenBank/DDBJ databases">
        <title>Complete sequence of chromosome of Shewanella baltica OS195.</title>
        <authorList>
            <consortium name="US DOE Joint Genome Institute"/>
            <person name="Copeland A."/>
            <person name="Lucas S."/>
            <person name="Lapidus A."/>
            <person name="Barry K."/>
            <person name="Glavina del Rio T."/>
            <person name="Dalin E."/>
            <person name="Tice H."/>
            <person name="Pitluck S."/>
            <person name="Chain P."/>
            <person name="Malfatti S."/>
            <person name="Shin M."/>
            <person name="Vergez L."/>
            <person name="Schmutz J."/>
            <person name="Larimer F."/>
            <person name="Land M."/>
            <person name="Hauser L."/>
            <person name="Kyrpides N."/>
            <person name="Kim E."/>
            <person name="Brettar I."/>
            <person name="Rodrigues J."/>
            <person name="Konstantinidis K."/>
            <person name="Klappenbach J."/>
            <person name="Hofle M."/>
            <person name="Tiedje J."/>
            <person name="Richardson P."/>
        </authorList>
    </citation>
    <scope>NUCLEOTIDE SEQUENCE [LARGE SCALE GENOMIC DNA]</scope>
    <source>
        <strain>OS195</strain>
    </source>
</reference>
<dbReference type="EMBL" id="CP000891">
    <property type="protein sequence ID" value="ABX47373.1"/>
    <property type="molecule type" value="Genomic_DNA"/>
</dbReference>
<dbReference type="RefSeq" id="WP_006083609.1">
    <property type="nucleotide sequence ID" value="NC_009997.1"/>
</dbReference>
<dbReference type="GeneID" id="67441751"/>
<dbReference type="KEGG" id="sbn:Sbal195_0191"/>
<dbReference type="HOGENOM" id="CLU_092227_0_2_6"/>
<dbReference type="Proteomes" id="UP000000770">
    <property type="component" value="Chromosome"/>
</dbReference>
<dbReference type="GO" id="GO:0015934">
    <property type="term" value="C:large ribosomal subunit"/>
    <property type="evidence" value="ECO:0007669"/>
    <property type="project" value="InterPro"/>
</dbReference>
<dbReference type="GO" id="GO:0070180">
    <property type="term" value="F:large ribosomal subunit rRNA binding"/>
    <property type="evidence" value="ECO:0007669"/>
    <property type="project" value="UniProtKB-UniRule"/>
</dbReference>
<dbReference type="GO" id="GO:0003735">
    <property type="term" value="F:structural constituent of ribosome"/>
    <property type="evidence" value="ECO:0007669"/>
    <property type="project" value="InterPro"/>
</dbReference>
<dbReference type="GO" id="GO:0006412">
    <property type="term" value="P:translation"/>
    <property type="evidence" value="ECO:0007669"/>
    <property type="project" value="UniProtKB-UniRule"/>
</dbReference>
<dbReference type="CDD" id="cd05797">
    <property type="entry name" value="Ribosomal_L10"/>
    <property type="match status" value="1"/>
</dbReference>
<dbReference type="FunFam" id="3.30.70.1730:FF:000001">
    <property type="entry name" value="50S ribosomal protein L10"/>
    <property type="match status" value="1"/>
</dbReference>
<dbReference type="Gene3D" id="3.30.70.1730">
    <property type="match status" value="1"/>
</dbReference>
<dbReference type="Gene3D" id="6.10.250.2350">
    <property type="match status" value="1"/>
</dbReference>
<dbReference type="HAMAP" id="MF_00362">
    <property type="entry name" value="Ribosomal_uL10"/>
    <property type="match status" value="1"/>
</dbReference>
<dbReference type="InterPro" id="IPR001790">
    <property type="entry name" value="Ribosomal_uL10"/>
</dbReference>
<dbReference type="InterPro" id="IPR043141">
    <property type="entry name" value="Ribosomal_uL10-like_sf"/>
</dbReference>
<dbReference type="InterPro" id="IPR022973">
    <property type="entry name" value="Ribosomal_uL10_bac"/>
</dbReference>
<dbReference type="InterPro" id="IPR047865">
    <property type="entry name" value="Ribosomal_uL10_bac_type"/>
</dbReference>
<dbReference type="InterPro" id="IPR002363">
    <property type="entry name" value="Ribosomal_uL10_CS_bac"/>
</dbReference>
<dbReference type="NCBIfam" id="NF000955">
    <property type="entry name" value="PRK00099.1-1"/>
    <property type="match status" value="1"/>
</dbReference>
<dbReference type="PANTHER" id="PTHR11560">
    <property type="entry name" value="39S RIBOSOMAL PROTEIN L10, MITOCHONDRIAL"/>
    <property type="match status" value="1"/>
</dbReference>
<dbReference type="Pfam" id="PF00466">
    <property type="entry name" value="Ribosomal_L10"/>
    <property type="match status" value="1"/>
</dbReference>
<dbReference type="SUPFAM" id="SSF160369">
    <property type="entry name" value="Ribosomal protein L10-like"/>
    <property type="match status" value="1"/>
</dbReference>
<dbReference type="PROSITE" id="PS01109">
    <property type="entry name" value="RIBOSOMAL_L10"/>
    <property type="match status" value="1"/>
</dbReference>
<evidence type="ECO:0000255" key="1">
    <source>
        <dbReference type="HAMAP-Rule" id="MF_00362"/>
    </source>
</evidence>
<evidence type="ECO:0000305" key="2"/>
<name>RL10_SHEB9</name>
<accession>A9KW93</accession>
<organism>
    <name type="scientific">Shewanella baltica (strain OS195)</name>
    <dbReference type="NCBI Taxonomy" id="399599"/>
    <lineage>
        <taxon>Bacteria</taxon>
        <taxon>Pseudomonadati</taxon>
        <taxon>Pseudomonadota</taxon>
        <taxon>Gammaproteobacteria</taxon>
        <taxon>Alteromonadales</taxon>
        <taxon>Shewanellaceae</taxon>
        <taxon>Shewanella</taxon>
    </lineage>
</organism>
<protein>
    <recommendedName>
        <fullName evidence="1">Large ribosomal subunit protein uL10</fullName>
    </recommendedName>
    <alternativeName>
        <fullName evidence="2">50S ribosomal protein L10</fullName>
    </alternativeName>
</protein>
<keyword id="KW-0687">Ribonucleoprotein</keyword>
<keyword id="KW-0689">Ribosomal protein</keyword>
<keyword id="KW-0694">RNA-binding</keyword>
<keyword id="KW-0699">rRNA-binding</keyword>
<sequence length="166" mass="17757">MALRLEDKKAIVAEVNEAAKGALSAVAADSRGVTVGAMTGLRKKAREAGVYVRVVRNTLARRAVEGTAFECLAETFTGPTLIAFSLEHPGAAARLLKDFAKEQANFEVKGAAFEGNFIPAAEIDRLAKLPTYEEALAQLMMTMKEASAGKFVRTLAALRDQKQEAA</sequence>
<comment type="function">
    <text evidence="1">Forms part of the ribosomal stalk, playing a central role in the interaction of the ribosome with GTP-bound translation factors.</text>
</comment>
<comment type="subunit">
    <text evidence="1">Part of the ribosomal stalk of the 50S ribosomal subunit. The N-terminus interacts with L11 and the large rRNA to form the base of the stalk. The C-terminus forms an elongated spine to which L12 dimers bind in a sequential fashion forming a multimeric L10(L12)X complex.</text>
</comment>
<comment type="similarity">
    <text evidence="1">Belongs to the universal ribosomal protein uL10 family.</text>
</comment>